<dbReference type="EMBL" id="U70999">
    <property type="protein sequence ID" value="AAB95195.1"/>
    <property type="molecule type" value="mRNA"/>
</dbReference>
<dbReference type="EMBL" id="U71000">
    <property type="protein sequence ID" value="AAB95196.1"/>
    <property type="molecule type" value="Genomic_DNA"/>
</dbReference>
<dbReference type="EMBL" id="AY095302">
    <property type="protein sequence ID" value="AAM47499.1"/>
    <property type="molecule type" value="Genomic_DNA"/>
</dbReference>
<dbReference type="EMBL" id="AY095301">
    <property type="protein sequence ID" value="AAM47499.1"/>
    <property type="status" value="JOINED"/>
    <property type="molecule type" value="Genomic_DNA"/>
</dbReference>
<dbReference type="EMBL" id="AY095298">
    <property type="protein sequence ID" value="AAM23259.1"/>
    <property type="molecule type" value="Genomic_DNA"/>
</dbReference>
<dbReference type="EMBL" id="AY095304">
    <property type="protein sequence ID" value="AAM44130.1"/>
    <property type="molecule type" value="Genomic_DNA"/>
</dbReference>
<dbReference type="EMBL" id="AY095303">
    <property type="protein sequence ID" value="AAM44130.1"/>
    <property type="status" value="JOINED"/>
    <property type="molecule type" value="Genomic_DNA"/>
</dbReference>
<dbReference type="EMBL" id="AY095299">
    <property type="protein sequence ID" value="AAM23262.1"/>
    <property type="molecule type" value="Genomic_DNA"/>
</dbReference>
<dbReference type="EMBL" id="DS497507">
    <property type="protein sequence ID" value="EDO95667.1"/>
    <property type="molecule type" value="Genomic_DNA"/>
</dbReference>
<dbReference type="EMBL" id="DS497231">
    <property type="protein sequence ID" value="EDO95734.1"/>
    <property type="molecule type" value="Genomic_DNA"/>
</dbReference>
<dbReference type="PIR" id="T09105">
    <property type="entry name" value="T09105"/>
</dbReference>
<dbReference type="RefSeq" id="XP_001694401.1">
    <property type="nucleotide sequence ID" value="XM_001694349.1"/>
</dbReference>
<dbReference type="PaxDb" id="3055-EDO95734"/>
<dbReference type="EnsemblPlants" id="PNW73842">
    <property type="protein sequence ID" value="PNW73842"/>
    <property type="gene ID" value="CHLRE_13g575000v5"/>
</dbReference>
<dbReference type="Gramene" id="PNW73842">
    <property type="protein sequence ID" value="PNW73842"/>
    <property type="gene ID" value="CHLRE_13g575000v5"/>
</dbReference>
<dbReference type="eggNOG" id="ENOG502QRFF">
    <property type="taxonomic scope" value="Eukaryota"/>
</dbReference>
<dbReference type="HOGENOM" id="CLU_034630_0_0_1"/>
<dbReference type="OMA" id="RFWIDYT"/>
<dbReference type="OrthoDB" id="565797at2759"/>
<dbReference type="CD-CODE" id="EA8B71D1">
    <property type="entry name" value="Pyrenoid"/>
</dbReference>
<dbReference type="GO" id="GO:0009535">
    <property type="term" value="C:chloroplast thylakoid membrane"/>
    <property type="evidence" value="ECO:0007669"/>
    <property type="project" value="UniProtKB-SubCell"/>
</dbReference>
<dbReference type="GO" id="GO:0017004">
    <property type="term" value="P:cytochrome complex assembly"/>
    <property type="evidence" value="ECO:0007669"/>
    <property type="project" value="UniProtKB-KW"/>
</dbReference>
<dbReference type="HAMAP" id="MF_01392">
    <property type="entry name" value="CytC_Ccs1"/>
    <property type="match status" value="1"/>
</dbReference>
<dbReference type="InterPro" id="IPR023494">
    <property type="entry name" value="Cyt_c_bgen_Ccs1/CcsB/ResB"/>
</dbReference>
<dbReference type="InterPro" id="IPR007816">
    <property type="entry name" value="ResB-like_domain"/>
</dbReference>
<dbReference type="PANTHER" id="PTHR31566">
    <property type="entry name" value="CYTOCHROME C BIOGENESIS PROTEIN CCS1, CHLOROPLASTIC"/>
    <property type="match status" value="1"/>
</dbReference>
<dbReference type="PANTHER" id="PTHR31566:SF0">
    <property type="entry name" value="CYTOCHROME C BIOGENESIS PROTEIN CCS1, CHLOROPLASTIC"/>
    <property type="match status" value="1"/>
</dbReference>
<dbReference type="Pfam" id="PF05140">
    <property type="entry name" value="ResB"/>
    <property type="match status" value="1"/>
</dbReference>
<accession>Q8GTZ9</accession>
<accession>A8JK64</accession>
<accession>O50041</accession>
<accession>Q8GTZ8</accession>
<accession>Q8H0J3</accession>
<proteinExistence type="evidence at protein level"/>
<comment type="function">
    <text evidence="3">Required during biogenesis of c-type cytochromes (cytochrome c6 and cytochrome f) at the step of heme attachment.</text>
</comment>
<comment type="subunit">
    <text evidence="4">May interact with ccsA.</text>
</comment>
<comment type="subcellular location">
    <subcellularLocation>
        <location evidence="6">Plastid</location>
        <location evidence="6">Chloroplast thylakoid membrane</location>
        <topology evidence="6">Multi-pass membrane protein</topology>
    </subcellularLocation>
</comment>
<comment type="miscellaneous">
    <text>Algae lacking CCS1 are unable to grow phototrophically; they specifically accumulate apocytochrome c6 and apocytochrome f.</text>
</comment>
<comment type="miscellaneous">
    <text>A mutant with a small stroma insert (ccs1-ac206) does not produce holocytochromes.</text>
</comment>
<comment type="similarity">
    <text evidence="5">Belongs to the Ccs1/CcsB family.</text>
</comment>
<name>CCS1_CHLRE</name>
<evidence type="ECO:0000255" key="1"/>
<evidence type="ECO:0000256" key="2">
    <source>
        <dbReference type="SAM" id="MobiDB-lite"/>
    </source>
</evidence>
<evidence type="ECO:0000269" key="3">
    <source>
    </source>
</evidence>
<evidence type="ECO:0000269" key="4">
    <source>
    </source>
</evidence>
<evidence type="ECO:0000305" key="5"/>
<evidence type="ECO:0000305" key="6">
    <source>
    </source>
</evidence>
<protein>
    <recommendedName>
        <fullName>Cytochrome c biogenesis protein CCS1, chloroplastic</fullName>
    </recommendedName>
    <alternativeName>
        <fullName>C-type cytochrome synthesis protein 1</fullName>
    </alternativeName>
</protein>
<gene>
    <name type="primary">CCS1</name>
    <name type="ORF">CHLREDRAFT_111044</name>
    <name type="ORF">CHLREDRAFT_195343</name>
</gene>
<keyword id="KW-0150">Chloroplast</keyword>
<keyword id="KW-0201">Cytochrome c-type biogenesis</keyword>
<keyword id="KW-0472">Membrane</keyword>
<keyword id="KW-0934">Plastid</keyword>
<keyword id="KW-0793">Thylakoid</keyword>
<keyword id="KW-0809">Transit peptide</keyword>
<keyword id="KW-0812">Transmembrane</keyword>
<keyword id="KW-1133">Transmembrane helix</keyword>
<organism>
    <name type="scientific">Chlamydomonas reinhardtii</name>
    <name type="common">Chlamydomonas smithii</name>
    <dbReference type="NCBI Taxonomy" id="3055"/>
    <lineage>
        <taxon>Eukaryota</taxon>
        <taxon>Viridiplantae</taxon>
        <taxon>Chlorophyta</taxon>
        <taxon>core chlorophytes</taxon>
        <taxon>Chlorophyceae</taxon>
        <taxon>CS clade</taxon>
        <taxon>Chlamydomonadales</taxon>
        <taxon>Chlamydomonadaceae</taxon>
        <taxon>Chlamydomonas</taxon>
    </lineage>
</organism>
<sequence>MQPYASVSGRCLSRPDALHVIPFGRPLQAIAGRRFVRCFAKGGQPGDKKKLNVTDKLRLGNTPPTLDVLKAPRPTDAPSAIDDAPSTSGLGLGGGVASPRTLVQSNAVQVAWRRLMKELSSLPRAIAIMALIAVLSGLGTFIPQNKSIEYYLVNYPDGAEKVLGFLTGDLILTLQLDHIYTADYFYLSMGLLAASLAACTYTRQWPAVKVAQRWRFLTQPKSLLKQGRTEVLPNARVSDLGAILLQRGYQVFVKDGSLYGFKGLAGKLGPIGVHAALLLCLFGTAWSGFGTLKGNVMCPEGQDFQVASFLQPSSPIASMPASASNVIHVNKFTIDYRPDGSVAQFYSDLSLLDPAQGGKEMMRKTISVNDPFRFNGVTMYQTDWSLSAVTLRVLGQDAPLARAAQAAEAQAAASTSGPTSSASSTSDALPQQRTAFNLPMASLEGKPGVAGRLWATFLPLAEPGQDGSAPKGISILARDPQSVVFYDAKGQFVGVRRPGSGKPIEVEGLALVVEDVTGATGLELKSDPGVPAVYAGFGGLMVTTLISYLSHSQVWALQQGSSLFVSGRTNRAKLAFDRELDDILNAVPELPPTAATTVASSASTAAPAPTAKQ</sequence>
<feature type="transit peptide" description="Chloroplast" evidence="1">
    <location>
        <begin position="1"/>
        <end position="36"/>
    </location>
</feature>
<feature type="transit peptide" description="Thylakoid" evidence="1">
    <location>
        <begin position="37"/>
        <end position="92"/>
    </location>
</feature>
<feature type="chain" id="PRO_0000363638" description="Cytochrome c biogenesis protein CCS1, chloroplastic">
    <location>
        <begin position="93"/>
        <end position="613"/>
    </location>
</feature>
<feature type="topological domain" description="Stromal" evidence="5">
    <location>
        <begin position="93"/>
        <end position="121"/>
    </location>
</feature>
<feature type="transmembrane region" description="Helical" evidence="5">
    <location>
        <begin position="122"/>
        <end position="142"/>
    </location>
</feature>
<feature type="topological domain" description="Lumenal" evidence="5">
    <location>
        <begin position="143"/>
        <end position="178"/>
    </location>
</feature>
<feature type="transmembrane region" description="Helical" evidence="5">
    <location>
        <begin position="179"/>
        <end position="199"/>
    </location>
</feature>
<feature type="topological domain" description="Stromal" evidence="5">
    <location>
        <begin position="200"/>
        <end position="268"/>
    </location>
</feature>
<feature type="transmembrane region" description="Helical" evidence="5">
    <location>
        <begin position="269"/>
        <end position="289"/>
    </location>
</feature>
<feature type="topological domain" description="Lumenal" evidence="5">
    <location>
        <begin position="290"/>
        <end position="613"/>
    </location>
</feature>
<feature type="region of interest" description="Disordered" evidence="2">
    <location>
        <begin position="63"/>
        <end position="86"/>
    </location>
</feature>
<feature type="region of interest" description="Disordered" evidence="2">
    <location>
        <begin position="409"/>
        <end position="429"/>
    </location>
</feature>
<feature type="compositionally biased region" description="Low complexity" evidence="2">
    <location>
        <begin position="409"/>
        <end position="428"/>
    </location>
</feature>
<feature type="sequence variant" description="In ccs1-4; abrogates production of c-type holocytochrome.">
    <location>
        <begin position="144"/>
        <end position="613"/>
    </location>
</feature>
<feature type="sequence variant" description="In ccs1-3; abrogates production of c-type holocytochrome.">
    <location>
        <begin position="536"/>
        <end position="613"/>
    </location>
</feature>
<feature type="mutagenesis site" description="No effect on c-type holocytochrome formation." evidence="3">
    <original>C</original>
    <variation>A</variation>
    <location>
        <position position="199"/>
    </location>
</feature>
<feature type="mutagenesis site" description="In ccs1-ac206; abrogates production of c-type holocytochrome.">
    <original>V</original>
    <variation>RESCACQRTAAALLLRFHSVAADPSPLLSFVLVAQV</variation>
    <location>
        <position position="251"/>
    </location>
</feature>
<feature type="mutagenesis site" description="In ccs1-2; about 2% protein accumulates, allows about 5% holocytochrome f but no holocytochrome c6 formation.">
    <original>G</original>
    <variation>N</variation>
    <location>
        <position position="260"/>
    </location>
</feature>
<feature type="mutagenesis site" description="Abrogates production of c-type holocytochrome; about 5% CCS1 protein accumulates." evidence="3">
    <original>H</original>
    <variation>A</variation>
    <location>
        <position position="274"/>
    </location>
</feature>
<feature type="mutagenesis site" description="No effect on c-type holocytochrome formation." evidence="3">
    <original>D</original>
    <variation>A</variation>
    <location>
        <position position="348"/>
    </location>
</feature>
<reference key="1">
    <citation type="journal article" date="1997" name="J. Biol. Chem.">
        <title>Ccs1, a nuclear gene required for the post-translational assembly of chloroplast c-type cytochromes.</title>
        <authorList>
            <person name="Inoue K."/>
            <person name="Dreyfuss B.W."/>
            <person name="Kindle K.L."/>
            <person name="Stern D.B."/>
            <person name="Merchant S."/>
            <person name="Sodeinde O.A."/>
        </authorList>
    </citation>
    <scope>NUCLEOTIDE SEQUENCE [GENOMIC DNA / MRNA]</scope>
    <source>
        <strain>21gr / CC-1690</strain>
    </source>
</reference>
<reference key="2">
    <citation type="journal article" date="2003" name="J. Biol. Chem.">
        <title>Functional analysis of a divergent system II protein, Ccs1, involved in c-type cytochrome biogenesis.</title>
        <authorList>
            <person name="Dreyfuss B.W."/>
            <person name="Hamel P.P."/>
            <person name="Nakamoto S.S."/>
            <person name="Merchant S."/>
        </authorList>
    </citation>
    <scope>NUCLEOTIDE SEQUENCE [GENOMIC DNA]</scope>
    <scope>FUNCTION</scope>
    <scope>SUBCELLULAR LOCATION</scope>
    <scope>POSSIBLE TOPOLOGY</scope>
    <scope>VARIANT CCS1-3 GLY-536 DEL</scope>
    <scope>VARIANT CCS1-4 GLN-144 DEL</scope>
    <scope>MUTANT CCS1-AC206 VAL-251 INS</scope>
    <scope>MUTANT GLY-260</scope>
    <scope>MUTAGENESIS OF CYS-199; HIS-274 AND ASP-348</scope>
    <source>
        <strain>137c / CC-125</strain>
        <strain>ccs1-2</strain>
        <strain>ccs1-3</strain>
        <strain>ccs1-4</strain>
        <strain>ccs1-ac206</strain>
    </source>
</reference>
<reference key="3">
    <citation type="journal article" date="2007" name="Science">
        <title>The Chlamydomonas genome reveals the evolution of key animal and plant functions.</title>
        <authorList>
            <person name="Merchant S.S."/>
            <person name="Prochnik S.E."/>
            <person name="Vallon O."/>
            <person name="Harris E.H."/>
            <person name="Karpowicz S.J."/>
            <person name="Witman G.B."/>
            <person name="Terry A."/>
            <person name="Salamov A."/>
            <person name="Fritz-Laylin L.K."/>
            <person name="Marechal-Drouard L."/>
            <person name="Marshall W.F."/>
            <person name="Qu L.H."/>
            <person name="Nelson D.R."/>
            <person name="Sanderfoot A.A."/>
            <person name="Spalding M.H."/>
            <person name="Kapitonov V.V."/>
            <person name="Ren Q."/>
            <person name="Ferris P."/>
            <person name="Lindquist E."/>
            <person name="Shapiro H."/>
            <person name="Lucas S.M."/>
            <person name="Grimwood J."/>
            <person name="Schmutz J."/>
            <person name="Cardol P."/>
            <person name="Cerutti H."/>
            <person name="Chanfreau G."/>
            <person name="Chen C.L."/>
            <person name="Cognat V."/>
            <person name="Croft M.T."/>
            <person name="Dent R."/>
            <person name="Dutcher S."/>
            <person name="Fernandez E."/>
            <person name="Fukuzawa H."/>
            <person name="Gonzalez-Ballester D."/>
            <person name="Gonzalez-Halphen D."/>
            <person name="Hallmann A."/>
            <person name="Hanikenne M."/>
            <person name="Hippler M."/>
            <person name="Inwood W."/>
            <person name="Jabbari K."/>
            <person name="Kalanon M."/>
            <person name="Kuras R."/>
            <person name="Lefebvre P.A."/>
            <person name="Lemaire S.D."/>
            <person name="Lobanov A.V."/>
            <person name="Lohr M."/>
            <person name="Manuell A."/>
            <person name="Meier I."/>
            <person name="Mets L."/>
            <person name="Mittag M."/>
            <person name="Mittelmeier T."/>
            <person name="Moroney J.V."/>
            <person name="Moseley J."/>
            <person name="Napoli C."/>
            <person name="Nedelcu A.M."/>
            <person name="Niyogi K."/>
            <person name="Novoselov S.V."/>
            <person name="Paulsen I.T."/>
            <person name="Pazour G.J."/>
            <person name="Purton S."/>
            <person name="Ral J.P."/>
            <person name="Riano-Pachon D.M."/>
            <person name="Riekhof W."/>
            <person name="Rymarquis L."/>
            <person name="Schroda M."/>
            <person name="Stern D."/>
            <person name="Umen J."/>
            <person name="Willows R."/>
            <person name="Wilson N."/>
            <person name="Zimmer S.L."/>
            <person name="Allmer J."/>
            <person name="Balk J."/>
            <person name="Bisova K."/>
            <person name="Chen C.J."/>
            <person name="Elias M."/>
            <person name="Gendler K."/>
            <person name="Hauser C."/>
            <person name="Lamb M.R."/>
            <person name="Ledford H."/>
            <person name="Long J.C."/>
            <person name="Minagawa J."/>
            <person name="Page M.D."/>
            <person name="Pan J."/>
            <person name="Pootakham W."/>
            <person name="Roje S."/>
            <person name="Rose A."/>
            <person name="Stahlberg E."/>
            <person name="Terauchi A.M."/>
            <person name="Yang P."/>
            <person name="Ball S."/>
            <person name="Bowler C."/>
            <person name="Dieckmann C.L."/>
            <person name="Gladyshev V.N."/>
            <person name="Green P."/>
            <person name="Jorgensen R."/>
            <person name="Mayfield S."/>
            <person name="Mueller-Roeber B."/>
            <person name="Rajamani S."/>
            <person name="Sayre R.T."/>
            <person name="Brokstein P."/>
            <person name="Dubchak I."/>
            <person name="Goodstein D."/>
            <person name="Hornick L."/>
            <person name="Huang Y.W."/>
            <person name="Jhaveri J."/>
            <person name="Luo Y."/>
            <person name="Martinez D."/>
            <person name="Ngau W.C."/>
            <person name="Otillar B."/>
            <person name="Poliakov A."/>
            <person name="Porter A."/>
            <person name="Szajkowski L."/>
            <person name="Werner G."/>
            <person name="Zhou K."/>
            <person name="Grigoriev I.V."/>
            <person name="Rokhsar D.S."/>
            <person name="Grossman A.R."/>
        </authorList>
    </citation>
    <scope>NUCLEOTIDE SEQUENCE [LARGE SCALE GENOMIC DNA] OF 1-143 AND 189-586</scope>
    <source>
        <strain>CC-503</strain>
    </source>
</reference>
<reference key="4">
    <citation type="journal article" date="1998" name="Genetics">
        <title>Genetic analysis of chloroplast c-type cytochrome assembly in Chlamydomonas reinhardtii: one chloroplast locus and at least four nuclear loci are required for heme attachment.</title>
        <authorList>
            <person name="Xie Z."/>
            <person name="Culler D."/>
            <person name="Dreyfuss B.W."/>
            <person name="Kuras R."/>
            <person name="Wollman F.-A."/>
            <person name="Girard-Bascou J."/>
            <person name="Merchant S."/>
        </authorList>
    </citation>
    <scope>GENETIC ANALYSIS</scope>
    <scope>SUGGESTION OF SUBUNIT</scope>
</reference>
<reference key="5">
    <citation type="journal article" date="2003" name="J. Biol. Chem.">
        <title>Essential histidine and tryptophan residues in CcsA, a system II polytopic cytochrome c biogenesis protein.</title>
        <authorList>
            <person name="Hamel P.P."/>
            <person name="Dreyfuss B.W."/>
            <person name="Xie Z."/>
            <person name="Gabilly S.T."/>
            <person name="Merchant S."/>
        </authorList>
    </citation>
    <scope>SUBUNIT</scope>
    <source>
        <strain>137c / CC-125</strain>
    </source>
</reference>